<gene>
    <name type="primary">nlk.2</name>
</gene>
<accession>B1H3E1</accession>
<comment type="function">
    <text evidence="1">Negatively regulates Wnt/beta-catenin-signaling during development. Plays a role together with sox11 in neural induction during early embryogenesis. Involved in TGFbeta-mediated mesoderm induction in early embryos, acting downstream of map3k7/tak1 to phosphorylate stat3. Augments the rnf138/narf-directed ubiquitination and degradation of tcf/lef by enhancing the association of rnf138/narf and tcf/lef. Phosphorylates mef2a to play a role in anterior neural development, including eye formation (By similarity).</text>
</comment>
<comment type="catalytic activity">
    <reaction evidence="5">
        <text>L-seryl-[protein] + ATP = O-phospho-L-seryl-[protein] + ADP + H(+)</text>
        <dbReference type="Rhea" id="RHEA:17989"/>
        <dbReference type="Rhea" id="RHEA-COMP:9863"/>
        <dbReference type="Rhea" id="RHEA-COMP:11604"/>
        <dbReference type="ChEBI" id="CHEBI:15378"/>
        <dbReference type="ChEBI" id="CHEBI:29999"/>
        <dbReference type="ChEBI" id="CHEBI:30616"/>
        <dbReference type="ChEBI" id="CHEBI:83421"/>
        <dbReference type="ChEBI" id="CHEBI:456216"/>
        <dbReference type="EC" id="2.7.11.24"/>
    </reaction>
</comment>
<comment type="catalytic activity">
    <reaction evidence="5">
        <text>L-threonyl-[protein] + ATP = O-phospho-L-threonyl-[protein] + ADP + H(+)</text>
        <dbReference type="Rhea" id="RHEA:46608"/>
        <dbReference type="Rhea" id="RHEA-COMP:11060"/>
        <dbReference type="Rhea" id="RHEA-COMP:11605"/>
        <dbReference type="ChEBI" id="CHEBI:15378"/>
        <dbReference type="ChEBI" id="CHEBI:30013"/>
        <dbReference type="ChEBI" id="CHEBI:30616"/>
        <dbReference type="ChEBI" id="CHEBI:61977"/>
        <dbReference type="ChEBI" id="CHEBI:456216"/>
        <dbReference type="EC" id="2.7.11.24"/>
    </reaction>
</comment>
<comment type="cofactor">
    <cofactor evidence="2">
        <name>Mg(2+)</name>
        <dbReference type="ChEBI" id="CHEBI:18420"/>
    </cofactor>
</comment>
<comment type="activity regulation">
    <text evidence="4">Activated by tyrosine and threonine phosphorylation.</text>
</comment>
<comment type="subunit">
    <text evidence="5">Interacts with sox11, hmgxb4/hmg2l1, rnf138/narf, stat3.1 and mef2a.</text>
</comment>
<comment type="subcellular location">
    <subcellularLocation>
        <location evidence="2">Nucleus</location>
    </subcellularLocation>
    <subcellularLocation>
        <location evidence="2">Cytoplasm</location>
    </subcellularLocation>
</comment>
<comment type="similarity">
    <text evidence="6">Belongs to the protein kinase superfamily. CMGC Ser/Thr protein kinase family. MAP kinase subfamily.</text>
</comment>
<name>NLK2_XENTR</name>
<evidence type="ECO:0000250" key="1"/>
<evidence type="ECO:0000250" key="2">
    <source>
        <dbReference type="UniProtKB" id="O54949"/>
    </source>
</evidence>
<evidence type="ECO:0000250" key="3">
    <source>
        <dbReference type="UniProtKB" id="P53779"/>
    </source>
</evidence>
<evidence type="ECO:0000250" key="4">
    <source>
        <dbReference type="UniProtKB" id="Q63844"/>
    </source>
</evidence>
<evidence type="ECO:0000250" key="5">
    <source>
        <dbReference type="UniProtKB" id="Q8QGV6"/>
    </source>
</evidence>
<evidence type="ECO:0000255" key="6"/>
<evidence type="ECO:0000255" key="7">
    <source>
        <dbReference type="PROSITE-ProRule" id="PRU00159"/>
    </source>
</evidence>
<evidence type="ECO:0000255" key="8">
    <source>
        <dbReference type="PROSITE-ProRule" id="PRU10027"/>
    </source>
</evidence>
<evidence type="ECO:0000312" key="9">
    <source>
        <dbReference type="EMBL" id="AAI61361.1"/>
    </source>
</evidence>
<reference evidence="9" key="1">
    <citation type="submission" date="2008-03" db="EMBL/GenBank/DDBJ databases">
        <authorList>
            <consortium name="NIH - Xenopus Gene Collection (XGC) project"/>
        </authorList>
    </citation>
    <scope>NUCLEOTIDE SEQUENCE [LARGE SCALE MRNA]</scope>
    <source>
        <tissue evidence="9">Neurula</tissue>
    </source>
</reference>
<feature type="chain" id="PRO_0000370236" description="Serine/threonine-protein kinase NLK2">
    <location>
        <begin position="1"/>
        <end position="454"/>
    </location>
</feature>
<feature type="domain" description="Protein kinase" evidence="7">
    <location>
        <begin position="67"/>
        <end position="356"/>
    </location>
</feature>
<feature type="active site" description="Proton acceptor" evidence="3 7 8">
    <location>
        <position position="193"/>
    </location>
</feature>
<feature type="binding site" evidence="3 7">
    <location>
        <begin position="73"/>
        <end position="81"/>
    </location>
    <ligand>
        <name>ATP</name>
        <dbReference type="ChEBI" id="CHEBI:30616"/>
    </ligand>
</feature>
<feature type="binding site" evidence="3 7">
    <location>
        <position position="96"/>
    </location>
    <ligand>
        <name>ATP</name>
        <dbReference type="ChEBI" id="CHEBI:30616"/>
    </ligand>
</feature>
<sequence length="454" mass="50652">MAFQGPGRSLPGQLCAGVFGGLIQPPLGQKFYCPNGGSGGGGVPAVPSPLPQALSAPQCNGDGRGEPEPDRPIGYGAFGVVWSVTDPRDGKRVALKKMPNVFQNLVSCKRVFRELKMLCFFKHDNVLSALDILQPPQIDCFEEIYVITELMQTDLHKVIVSPQPLSSDHIKVFLYQILRGLKYLHSAGILHRDIKPGNLLVNSNCVLKICDFGLARVEELDESQHMTQEVVTQYYRAPEILMGSRHYRSAIDIWSVGCIFAELLGRRILFQAQSPIQQLDLITDLLGTPPLTAMRSACEGARAHILRGPHKPPSLSVLYMLSGEATHEAVHLLCRMLLFDPLKRISAKDALAHPYLEEGRLRYHTCMCHCCYSVSSGRVYTADFEPTATNRFDDSYEKSLTSVWQVKELVHRFITDQQQGKRPPLCINPHSAAFKTFIRSTAWHSSKVSKKEER</sequence>
<dbReference type="EC" id="2.7.11.24"/>
<dbReference type="EMBL" id="BC161361">
    <property type="protein sequence ID" value="AAI61361.1"/>
    <property type="molecule type" value="mRNA"/>
</dbReference>
<dbReference type="RefSeq" id="NP_001116917.1">
    <property type="nucleotide sequence ID" value="NM_001123445.1"/>
</dbReference>
<dbReference type="SMR" id="B1H3E1"/>
<dbReference type="STRING" id="8364.ENSXETP00000054580"/>
<dbReference type="PaxDb" id="8364-ENSXETP00000027352"/>
<dbReference type="GeneID" id="100144684"/>
<dbReference type="KEGG" id="xtr:100144684"/>
<dbReference type="AGR" id="Xenbase:XB-GENE-1218923"/>
<dbReference type="CTD" id="100144684"/>
<dbReference type="Xenbase" id="XB-GENE-1218923">
    <property type="gene designation" value="nlk.2"/>
</dbReference>
<dbReference type="eggNOG" id="KOG0664">
    <property type="taxonomic scope" value="Eukaryota"/>
</dbReference>
<dbReference type="InParanoid" id="B1H3E1"/>
<dbReference type="OrthoDB" id="192887at2759"/>
<dbReference type="Proteomes" id="UP000008143">
    <property type="component" value="Chromosome 9"/>
</dbReference>
<dbReference type="GO" id="GO:0005737">
    <property type="term" value="C:cytoplasm"/>
    <property type="evidence" value="ECO:0007669"/>
    <property type="project" value="UniProtKB-SubCell"/>
</dbReference>
<dbReference type="GO" id="GO:0005634">
    <property type="term" value="C:nucleus"/>
    <property type="evidence" value="ECO:0000250"/>
    <property type="project" value="UniProtKB"/>
</dbReference>
<dbReference type="GO" id="GO:0005524">
    <property type="term" value="F:ATP binding"/>
    <property type="evidence" value="ECO:0000250"/>
    <property type="project" value="UniProtKB"/>
</dbReference>
<dbReference type="GO" id="GO:0140297">
    <property type="term" value="F:DNA-binding transcription factor binding"/>
    <property type="evidence" value="ECO:0000250"/>
    <property type="project" value="UniProtKB"/>
</dbReference>
<dbReference type="GO" id="GO:0000287">
    <property type="term" value="F:magnesium ion binding"/>
    <property type="evidence" value="ECO:0000250"/>
    <property type="project" value="UniProtKB"/>
</dbReference>
<dbReference type="GO" id="GO:0004707">
    <property type="term" value="F:MAP kinase activity"/>
    <property type="evidence" value="ECO:0007669"/>
    <property type="project" value="UniProtKB-EC"/>
</dbReference>
<dbReference type="GO" id="GO:0106310">
    <property type="term" value="F:protein serine kinase activity"/>
    <property type="evidence" value="ECO:0007669"/>
    <property type="project" value="RHEA"/>
</dbReference>
<dbReference type="GO" id="GO:0004674">
    <property type="term" value="F:protein serine/threonine kinase activity"/>
    <property type="evidence" value="ECO:0000250"/>
    <property type="project" value="UniProtKB"/>
</dbReference>
<dbReference type="GO" id="GO:0031625">
    <property type="term" value="F:ubiquitin protein ligase binding"/>
    <property type="evidence" value="ECO:0000250"/>
    <property type="project" value="UniProtKB"/>
</dbReference>
<dbReference type="GO" id="GO:0009952">
    <property type="term" value="P:anterior/posterior pattern specification"/>
    <property type="evidence" value="ECO:0000250"/>
    <property type="project" value="UniProtKB"/>
</dbReference>
<dbReference type="GO" id="GO:0001707">
    <property type="term" value="P:mesoderm formation"/>
    <property type="evidence" value="ECO:0000250"/>
    <property type="project" value="UniProtKB"/>
</dbReference>
<dbReference type="GO" id="GO:0007399">
    <property type="term" value="P:nervous system development"/>
    <property type="evidence" value="ECO:0000250"/>
    <property type="project" value="UniProtKB"/>
</dbReference>
<dbReference type="GO" id="GO:0018105">
    <property type="term" value="P:peptidyl-serine phosphorylation"/>
    <property type="evidence" value="ECO:0000250"/>
    <property type="project" value="UniProtKB"/>
</dbReference>
<dbReference type="GO" id="GO:0018107">
    <property type="term" value="P:peptidyl-threonine phosphorylation"/>
    <property type="evidence" value="ECO:0000250"/>
    <property type="project" value="UniProtKB"/>
</dbReference>
<dbReference type="GO" id="GO:0031398">
    <property type="term" value="P:positive regulation of protein ubiquitination"/>
    <property type="evidence" value="ECO:0000250"/>
    <property type="project" value="UniProtKB"/>
</dbReference>
<dbReference type="GO" id="GO:1904894">
    <property type="term" value="P:positive regulation of receptor signaling pathway via STAT"/>
    <property type="evidence" value="ECO:0000250"/>
    <property type="project" value="UniProtKB"/>
</dbReference>
<dbReference type="GO" id="GO:0007179">
    <property type="term" value="P:transforming growth factor beta receptor signaling pathway"/>
    <property type="evidence" value="ECO:0000250"/>
    <property type="project" value="UniProtKB"/>
</dbReference>
<dbReference type="GO" id="GO:0016055">
    <property type="term" value="P:Wnt signaling pathway"/>
    <property type="evidence" value="ECO:0007669"/>
    <property type="project" value="UniProtKB-KW"/>
</dbReference>
<dbReference type="CDD" id="cd07853">
    <property type="entry name" value="STKc_NLK"/>
    <property type="match status" value="1"/>
</dbReference>
<dbReference type="FunFam" id="1.10.510.10:FF:000162">
    <property type="entry name" value="Mitogen-activated protein kinase"/>
    <property type="match status" value="1"/>
</dbReference>
<dbReference type="FunFam" id="3.30.200.20:FF:000164">
    <property type="entry name" value="Mitogen-activated protein kinase"/>
    <property type="match status" value="1"/>
</dbReference>
<dbReference type="Gene3D" id="3.30.200.20">
    <property type="entry name" value="Phosphorylase Kinase, domain 1"/>
    <property type="match status" value="1"/>
</dbReference>
<dbReference type="Gene3D" id="1.10.510.10">
    <property type="entry name" value="Transferase(Phosphotransferase) domain 1"/>
    <property type="match status" value="1"/>
</dbReference>
<dbReference type="InterPro" id="IPR011009">
    <property type="entry name" value="Kinase-like_dom_sf"/>
</dbReference>
<dbReference type="InterPro" id="IPR050117">
    <property type="entry name" value="MAP_kinase"/>
</dbReference>
<dbReference type="InterPro" id="IPR003527">
    <property type="entry name" value="MAP_kinase_CS"/>
</dbReference>
<dbReference type="InterPro" id="IPR000719">
    <property type="entry name" value="Prot_kinase_dom"/>
</dbReference>
<dbReference type="InterPro" id="IPR017441">
    <property type="entry name" value="Protein_kinase_ATP_BS"/>
</dbReference>
<dbReference type="InterPro" id="IPR008271">
    <property type="entry name" value="Ser/Thr_kinase_AS"/>
</dbReference>
<dbReference type="PANTHER" id="PTHR24055">
    <property type="entry name" value="MITOGEN-ACTIVATED PROTEIN KINASE"/>
    <property type="match status" value="1"/>
</dbReference>
<dbReference type="Pfam" id="PF00069">
    <property type="entry name" value="Pkinase"/>
    <property type="match status" value="1"/>
</dbReference>
<dbReference type="SMART" id="SM00220">
    <property type="entry name" value="S_TKc"/>
    <property type="match status" value="1"/>
</dbReference>
<dbReference type="SUPFAM" id="SSF56112">
    <property type="entry name" value="Protein kinase-like (PK-like)"/>
    <property type="match status" value="1"/>
</dbReference>
<dbReference type="PROSITE" id="PS01351">
    <property type="entry name" value="MAPK"/>
    <property type="match status" value="1"/>
</dbReference>
<dbReference type="PROSITE" id="PS00107">
    <property type="entry name" value="PROTEIN_KINASE_ATP"/>
    <property type="match status" value="1"/>
</dbReference>
<dbReference type="PROSITE" id="PS50011">
    <property type="entry name" value="PROTEIN_KINASE_DOM"/>
    <property type="match status" value="1"/>
</dbReference>
<dbReference type="PROSITE" id="PS00108">
    <property type="entry name" value="PROTEIN_KINASE_ST"/>
    <property type="match status" value="1"/>
</dbReference>
<proteinExistence type="evidence at transcript level"/>
<protein>
    <recommendedName>
        <fullName>Serine/threonine-protein kinase NLK2</fullName>
        <ecNumber>2.7.11.24</ecNumber>
    </recommendedName>
    <alternativeName>
        <fullName>Nemo-like kinase 2</fullName>
        <shortName>Nlk.2</shortName>
    </alternativeName>
</protein>
<organism>
    <name type="scientific">Xenopus tropicalis</name>
    <name type="common">Western clawed frog</name>
    <name type="synonym">Silurana tropicalis</name>
    <dbReference type="NCBI Taxonomy" id="8364"/>
    <lineage>
        <taxon>Eukaryota</taxon>
        <taxon>Metazoa</taxon>
        <taxon>Chordata</taxon>
        <taxon>Craniata</taxon>
        <taxon>Vertebrata</taxon>
        <taxon>Euteleostomi</taxon>
        <taxon>Amphibia</taxon>
        <taxon>Batrachia</taxon>
        <taxon>Anura</taxon>
        <taxon>Pipoidea</taxon>
        <taxon>Pipidae</taxon>
        <taxon>Xenopodinae</taxon>
        <taxon>Xenopus</taxon>
        <taxon>Silurana</taxon>
    </lineage>
</organism>
<keyword id="KW-0067">ATP-binding</keyword>
<keyword id="KW-0963">Cytoplasm</keyword>
<keyword id="KW-0217">Developmental protein</keyword>
<keyword id="KW-0418">Kinase</keyword>
<keyword id="KW-0460">Magnesium</keyword>
<keyword id="KW-0479">Metal-binding</keyword>
<keyword id="KW-0547">Nucleotide-binding</keyword>
<keyword id="KW-0539">Nucleus</keyword>
<keyword id="KW-0597">Phosphoprotein</keyword>
<keyword id="KW-1185">Reference proteome</keyword>
<keyword id="KW-0723">Serine/threonine-protein kinase</keyword>
<keyword id="KW-0804">Transcription</keyword>
<keyword id="KW-0805">Transcription regulation</keyword>
<keyword id="KW-0808">Transferase</keyword>
<keyword id="KW-0833">Ubl conjugation pathway</keyword>
<keyword id="KW-0879">Wnt signaling pathway</keyword>